<organism>
    <name type="scientific">Trichophyton verrucosum (strain HKI 0517)</name>
    <dbReference type="NCBI Taxonomy" id="663202"/>
    <lineage>
        <taxon>Eukaryota</taxon>
        <taxon>Fungi</taxon>
        <taxon>Dikarya</taxon>
        <taxon>Ascomycota</taxon>
        <taxon>Pezizomycotina</taxon>
        <taxon>Eurotiomycetes</taxon>
        <taxon>Eurotiomycetidae</taxon>
        <taxon>Onygenales</taxon>
        <taxon>Arthrodermataceae</taxon>
        <taxon>Trichophyton</taxon>
    </lineage>
</organism>
<evidence type="ECO:0000250" key="1"/>
<evidence type="ECO:0000255" key="2"/>
<evidence type="ECO:0000305" key="3"/>
<proteinExistence type="inferred from homology"/>
<accession>D4DHE3</accession>
<protein>
    <recommendedName>
        <fullName>Probable leucine aminopeptidase 1</fullName>
        <ecNumber>3.4.11.-</ecNumber>
    </recommendedName>
    <alternativeName>
        <fullName>Leucyl aminopeptidase 1</fullName>
        <shortName>LAP1</shortName>
    </alternativeName>
</protein>
<dbReference type="EC" id="3.4.11.-"/>
<dbReference type="EMBL" id="ACYE01000379">
    <property type="protein sequence ID" value="EFE38725.1"/>
    <property type="molecule type" value="Genomic_DNA"/>
</dbReference>
<dbReference type="RefSeq" id="XP_003019370.1">
    <property type="nucleotide sequence ID" value="XM_003019324.1"/>
</dbReference>
<dbReference type="SMR" id="D4DHE3"/>
<dbReference type="MEROPS" id="M28.022"/>
<dbReference type="GlyCosmos" id="D4DHE3">
    <property type="glycosylation" value="2 sites, No reported glycans"/>
</dbReference>
<dbReference type="GeneID" id="9577773"/>
<dbReference type="KEGG" id="tve:TRV_06599"/>
<dbReference type="HOGENOM" id="CLU_025866_0_1_1"/>
<dbReference type="OrthoDB" id="2914at34384"/>
<dbReference type="Proteomes" id="UP000008383">
    <property type="component" value="Unassembled WGS sequence"/>
</dbReference>
<dbReference type="GO" id="GO:0005576">
    <property type="term" value="C:extracellular region"/>
    <property type="evidence" value="ECO:0007669"/>
    <property type="project" value="UniProtKB-SubCell"/>
</dbReference>
<dbReference type="GO" id="GO:0004177">
    <property type="term" value="F:aminopeptidase activity"/>
    <property type="evidence" value="ECO:0007669"/>
    <property type="project" value="UniProtKB-KW"/>
</dbReference>
<dbReference type="GO" id="GO:0046872">
    <property type="term" value="F:metal ion binding"/>
    <property type="evidence" value="ECO:0007669"/>
    <property type="project" value="UniProtKB-KW"/>
</dbReference>
<dbReference type="GO" id="GO:0008235">
    <property type="term" value="F:metalloexopeptidase activity"/>
    <property type="evidence" value="ECO:0007669"/>
    <property type="project" value="InterPro"/>
</dbReference>
<dbReference type="GO" id="GO:0006508">
    <property type="term" value="P:proteolysis"/>
    <property type="evidence" value="ECO:0007669"/>
    <property type="project" value="UniProtKB-KW"/>
</dbReference>
<dbReference type="CDD" id="cd03879">
    <property type="entry name" value="M28_AAP"/>
    <property type="match status" value="1"/>
</dbReference>
<dbReference type="FunFam" id="3.40.630.10:FF:000042">
    <property type="entry name" value="Peptide hydrolase"/>
    <property type="match status" value="1"/>
</dbReference>
<dbReference type="Gene3D" id="3.40.630.10">
    <property type="entry name" value="Zn peptidases"/>
    <property type="match status" value="1"/>
</dbReference>
<dbReference type="InterPro" id="IPR045175">
    <property type="entry name" value="M28_fam"/>
</dbReference>
<dbReference type="InterPro" id="IPR007484">
    <property type="entry name" value="Peptidase_M28"/>
</dbReference>
<dbReference type="PANTHER" id="PTHR12147:SF56">
    <property type="entry name" value="AMINOPEPTIDASE YDR415C-RELATED"/>
    <property type="match status" value="1"/>
</dbReference>
<dbReference type="PANTHER" id="PTHR12147">
    <property type="entry name" value="METALLOPEPTIDASE M28 FAMILY MEMBER"/>
    <property type="match status" value="1"/>
</dbReference>
<dbReference type="Pfam" id="PF04389">
    <property type="entry name" value="Peptidase_M28"/>
    <property type="match status" value="1"/>
</dbReference>
<dbReference type="SUPFAM" id="SSF53187">
    <property type="entry name" value="Zn-dependent exopeptidases"/>
    <property type="match status" value="1"/>
</dbReference>
<sequence length="373" mass="40788">MKLLSVLALSATATSVLGASIPVDTRAEKFLIELAPGETRWVTEEEKWELKRKGQDFFDITDEEVGFTAAVTQPAIAYPTSIRHADAVNAMIATLSKENMQRDLTKLSSFHNRYYKADFGKQSATWLQEQVQAAINTAGASRYGAKVVSFRHNWAQHSIVATIPGRSPEIVVVGAHQDSINQRSPMTGRAPGADDNGSGSVTILEALRGVLQDQTIVQGKAANTIEFHWYAGEEAGLLGSQAIFANYKQTGKKVKGMLNQDMTGYIKGMVDKGLKVSFGIITDNVNANLTKFVRMIISKYCSIPTIDTRCGYACSDHASANRNGYPSAMVAESPIDLLDPHLHTDSDTIDYLDFDHMIEHAKLIVGFVTELAK</sequence>
<keyword id="KW-0031">Aminopeptidase</keyword>
<keyword id="KW-1015">Disulfide bond</keyword>
<keyword id="KW-0325">Glycoprotein</keyword>
<keyword id="KW-0378">Hydrolase</keyword>
<keyword id="KW-0479">Metal-binding</keyword>
<keyword id="KW-0645">Protease</keyword>
<keyword id="KW-0964">Secreted</keyword>
<keyword id="KW-0732">Signal</keyword>
<keyword id="KW-0843">Virulence</keyword>
<keyword id="KW-0862">Zinc</keyword>
<reference key="1">
    <citation type="journal article" date="2011" name="Genome Biol.">
        <title>Comparative and functional genomics provide insights into the pathogenicity of dermatophytic fungi.</title>
        <authorList>
            <person name="Burmester A."/>
            <person name="Shelest E."/>
            <person name="Gloeckner G."/>
            <person name="Heddergott C."/>
            <person name="Schindler S."/>
            <person name="Staib P."/>
            <person name="Heidel A."/>
            <person name="Felder M."/>
            <person name="Petzold A."/>
            <person name="Szafranski K."/>
            <person name="Feuermann M."/>
            <person name="Pedruzzi I."/>
            <person name="Priebe S."/>
            <person name="Groth M."/>
            <person name="Winkler R."/>
            <person name="Li W."/>
            <person name="Kniemeyer O."/>
            <person name="Schroeckh V."/>
            <person name="Hertweck C."/>
            <person name="Hube B."/>
            <person name="White T.C."/>
            <person name="Platzer M."/>
            <person name="Guthke R."/>
            <person name="Heitman J."/>
            <person name="Woestemeyer J."/>
            <person name="Zipfel P.F."/>
            <person name="Monod M."/>
            <person name="Brakhage A.A."/>
        </authorList>
    </citation>
    <scope>NUCLEOTIDE SEQUENCE [LARGE SCALE GENOMIC DNA]</scope>
    <source>
        <strain>HKI 0517</strain>
    </source>
</reference>
<name>LAP1_TRIVH</name>
<feature type="signal peptide" evidence="2">
    <location>
        <begin position="1"/>
        <end position="18"/>
    </location>
</feature>
<feature type="chain" id="PRO_0000397766" description="Probable leucine aminopeptidase 1">
    <location>
        <begin position="19"/>
        <end position="373"/>
    </location>
</feature>
<feature type="binding site" evidence="1">
    <location>
        <position position="176"/>
    </location>
    <ligand>
        <name>Zn(2+)</name>
        <dbReference type="ChEBI" id="CHEBI:29105"/>
        <label>1</label>
    </ligand>
</feature>
<feature type="binding site" evidence="1">
    <location>
        <position position="195"/>
    </location>
    <ligand>
        <name>Zn(2+)</name>
        <dbReference type="ChEBI" id="CHEBI:29105"/>
        <label>1</label>
    </ligand>
</feature>
<feature type="binding site" evidence="1">
    <location>
        <position position="195"/>
    </location>
    <ligand>
        <name>Zn(2+)</name>
        <dbReference type="ChEBI" id="CHEBI:29105"/>
        <label>2</label>
        <note>catalytic</note>
    </ligand>
</feature>
<feature type="binding site" evidence="1">
    <location>
        <position position="234"/>
    </location>
    <ligand>
        <name>Zn(2+)</name>
        <dbReference type="ChEBI" id="CHEBI:29105"/>
        <label>2</label>
        <note>catalytic</note>
    </ligand>
</feature>
<feature type="binding site" evidence="1">
    <location>
        <position position="261"/>
    </location>
    <ligand>
        <name>Zn(2+)</name>
        <dbReference type="ChEBI" id="CHEBI:29105"/>
        <label>1</label>
    </ligand>
</feature>
<feature type="binding site" evidence="1">
    <location>
        <position position="343"/>
    </location>
    <ligand>
        <name>Zn(2+)</name>
        <dbReference type="ChEBI" id="CHEBI:29105"/>
        <label>2</label>
        <note>catalytic</note>
    </ligand>
</feature>
<feature type="glycosylation site" description="N-linked (GlcNAc...) asparagine" evidence="2">
    <location>
        <position position="196"/>
    </location>
</feature>
<feature type="glycosylation site" description="N-linked (GlcNAc...) asparagine" evidence="2">
    <location>
        <position position="288"/>
    </location>
</feature>
<feature type="disulfide bond" evidence="1">
    <location>
        <begin position="310"/>
        <end position="314"/>
    </location>
</feature>
<gene>
    <name type="primary">LAP1</name>
    <name type="ORF">TRV_06599</name>
</gene>
<comment type="function">
    <text evidence="1">Extracellular aminopeptidase which contributes to pathogenicity.</text>
</comment>
<comment type="cofactor">
    <cofactor evidence="1">
        <name>Zn(2+)</name>
        <dbReference type="ChEBI" id="CHEBI:29105"/>
    </cofactor>
    <text evidence="1">Binds 2 Zn(2+) ions per subunit.</text>
</comment>
<comment type="subunit">
    <text evidence="1">Monomer.</text>
</comment>
<comment type="subcellular location">
    <subcellularLocation>
        <location evidence="1">Secreted</location>
    </subcellularLocation>
</comment>
<comment type="similarity">
    <text evidence="3">Belongs to the peptidase M28 family. M28E subfamily.</text>
</comment>